<evidence type="ECO:0000255" key="1">
    <source>
        <dbReference type="HAMAP-Rule" id="MF_00555"/>
    </source>
</evidence>
<dbReference type="EC" id="6.3.1.1" evidence="1"/>
<dbReference type="EMBL" id="CP001144">
    <property type="protein sequence ID" value="ACH75436.1"/>
    <property type="molecule type" value="Genomic_DNA"/>
</dbReference>
<dbReference type="RefSeq" id="WP_000845123.1">
    <property type="nucleotide sequence ID" value="NC_011205.1"/>
</dbReference>
<dbReference type="SMR" id="B5FN47"/>
<dbReference type="KEGG" id="sed:SeD_A4269"/>
<dbReference type="HOGENOM" id="CLU_071543_0_0_6"/>
<dbReference type="UniPathway" id="UPA00134">
    <property type="reaction ID" value="UER00194"/>
</dbReference>
<dbReference type="Proteomes" id="UP000008322">
    <property type="component" value="Chromosome"/>
</dbReference>
<dbReference type="GO" id="GO:0005829">
    <property type="term" value="C:cytosol"/>
    <property type="evidence" value="ECO:0007669"/>
    <property type="project" value="TreeGrafter"/>
</dbReference>
<dbReference type="GO" id="GO:0004071">
    <property type="term" value="F:aspartate-ammonia ligase activity"/>
    <property type="evidence" value="ECO:0007669"/>
    <property type="project" value="UniProtKB-UniRule"/>
</dbReference>
<dbReference type="GO" id="GO:0005524">
    <property type="term" value="F:ATP binding"/>
    <property type="evidence" value="ECO:0007669"/>
    <property type="project" value="UniProtKB-UniRule"/>
</dbReference>
<dbReference type="GO" id="GO:0070981">
    <property type="term" value="P:L-asparagine biosynthetic process"/>
    <property type="evidence" value="ECO:0007669"/>
    <property type="project" value="UniProtKB-UniRule"/>
</dbReference>
<dbReference type="CDD" id="cd00645">
    <property type="entry name" value="AsnA"/>
    <property type="match status" value="1"/>
</dbReference>
<dbReference type="FunFam" id="3.30.930.10:FF:000025">
    <property type="entry name" value="Aspartate--ammonia ligase"/>
    <property type="match status" value="1"/>
</dbReference>
<dbReference type="Gene3D" id="3.30.930.10">
    <property type="entry name" value="Bira Bifunctional Protein, Domain 2"/>
    <property type="match status" value="1"/>
</dbReference>
<dbReference type="HAMAP" id="MF_00555">
    <property type="entry name" value="AsnA"/>
    <property type="match status" value="1"/>
</dbReference>
<dbReference type="InterPro" id="IPR006195">
    <property type="entry name" value="aa-tRNA-synth_II"/>
</dbReference>
<dbReference type="InterPro" id="IPR045864">
    <property type="entry name" value="aa-tRNA-synth_II/BPL/LPL"/>
</dbReference>
<dbReference type="InterPro" id="IPR004618">
    <property type="entry name" value="AsnA"/>
</dbReference>
<dbReference type="NCBIfam" id="TIGR00669">
    <property type="entry name" value="asnA"/>
    <property type="match status" value="1"/>
</dbReference>
<dbReference type="PANTHER" id="PTHR30073">
    <property type="entry name" value="ASPARTATE--AMMONIA LIGASE"/>
    <property type="match status" value="1"/>
</dbReference>
<dbReference type="PANTHER" id="PTHR30073:SF5">
    <property type="entry name" value="ASPARTATE--AMMONIA LIGASE"/>
    <property type="match status" value="1"/>
</dbReference>
<dbReference type="Pfam" id="PF03590">
    <property type="entry name" value="AsnA"/>
    <property type="match status" value="1"/>
</dbReference>
<dbReference type="PIRSF" id="PIRSF001555">
    <property type="entry name" value="Asp_ammon_ligase"/>
    <property type="match status" value="1"/>
</dbReference>
<dbReference type="SUPFAM" id="SSF55681">
    <property type="entry name" value="Class II aaRS and biotin synthetases"/>
    <property type="match status" value="1"/>
</dbReference>
<dbReference type="PROSITE" id="PS50862">
    <property type="entry name" value="AA_TRNA_LIGASE_II"/>
    <property type="match status" value="1"/>
</dbReference>
<organism>
    <name type="scientific">Salmonella dublin (strain CT_02021853)</name>
    <dbReference type="NCBI Taxonomy" id="439851"/>
    <lineage>
        <taxon>Bacteria</taxon>
        <taxon>Pseudomonadati</taxon>
        <taxon>Pseudomonadota</taxon>
        <taxon>Gammaproteobacteria</taxon>
        <taxon>Enterobacterales</taxon>
        <taxon>Enterobacteriaceae</taxon>
        <taxon>Salmonella</taxon>
    </lineage>
</organism>
<gene>
    <name evidence="1" type="primary">asnA</name>
    <name type="ordered locus">SeD_A4269</name>
</gene>
<reference key="1">
    <citation type="journal article" date="2011" name="J. Bacteriol.">
        <title>Comparative genomics of 28 Salmonella enterica isolates: evidence for CRISPR-mediated adaptive sublineage evolution.</title>
        <authorList>
            <person name="Fricke W.F."/>
            <person name="Mammel M.K."/>
            <person name="McDermott P.F."/>
            <person name="Tartera C."/>
            <person name="White D.G."/>
            <person name="Leclerc J.E."/>
            <person name="Ravel J."/>
            <person name="Cebula T.A."/>
        </authorList>
    </citation>
    <scope>NUCLEOTIDE SEQUENCE [LARGE SCALE GENOMIC DNA]</scope>
    <source>
        <strain>CT_02021853</strain>
    </source>
</reference>
<name>ASNA_SALDC</name>
<feature type="chain" id="PRO_1000129124" description="Aspartate--ammonia ligase">
    <location>
        <begin position="1"/>
        <end position="330"/>
    </location>
</feature>
<comment type="catalytic activity">
    <reaction evidence="1">
        <text>L-aspartate + NH4(+) + ATP = L-asparagine + AMP + diphosphate + H(+)</text>
        <dbReference type="Rhea" id="RHEA:11372"/>
        <dbReference type="ChEBI" id="CHEBI:15378"/>
        <dbReference type="ChEBI" id="CHEBI:28938"/>
        <dbReference type="ChEBI" id="CHEBI:29991"/>
        <dbReference type="ChEBI" id="CHEBI:30616"/>
        <dbReference type="ChEBI" id="CHEBI:33019"/>
        <dbReference type="ChEBI" id="CHEBI:58048"/>
        <dbReference type="ChEBI" id="CHEBI:456215"/>
        <dbReference type="EC" id="6.3.1.1"/>
    </reaction>
</comment>
<comment type="pathway">
    <text evidence="1">Amino-acid biosynthesis; L-asparagine biosynthesis; L-asparagine from L-aspartate (ammonia route): step 1/1.</text>
</comment>
<comment type="subcellular location">
    <subcellularLocation>
        <location evidence="1">Cytoplasm</location>
    </subcellularLocation>
</comment>
<comment type="similarity">
    <text evidence="1">Belongs to the class-II aminoacyl-tRNA synthetase family. AsnA subfamily.</text>
</comment>
<protein>
    <recommendedName>
        <fullName evidence="1">Aspartate--ammonia ligase</fullName>
        <ecNumber evidence="1">6.3.1.1</ecNumber>
    </recommendedName>
    <alternativeName>
        <fullName evidence="1">Asparagine synthetase A</fullName>
    </alternativeName>
</protein>
<keyword id="KW-0028">Amino-acid biosynthesis</keyword>
<keyword id="KW-0061">Asparagine biosynthesis</keyword>
<keyword id="KW-0067">ATP-binding</keyword>
<keyword id="KW-0963">Cytoplasm</keyword>
<keyword id="KW-0436">Ligase</keyword>
<keyword id="KW-0547">Nucleotide-binding</keyword>
<sequence length="330" mass="36838">MKTAYIAKQRQISFVKSHFSRQLEERLGLIEVQAPILSRVGDGTQDNLSGCEKAVQVKVKALPDAQFEVVHSLAKWKRQTLGQHDFSAGEGLYTHMKALRPDEDRLSPLHSVYVDQWDWERVMGDGERQFSTLKSTVEAIWAGIKATEAEVHKQFGLAPFLPEQIQFVHSQELLSRYPDLDAKGRERAIAKELGAVFLVGIGGKLSDGHRHDVRAPDYDDWSSASELGYAGLNGDILVWNPVLEDAFELSSMGIRVDADTLMRQLALTGDEDRLQLEWHQALLRGEMPQTIGGGIGQSRLTMLLLQLPHIGQVQCGVWPAQVRESIPAIL</sequence>
<accession>B5FN47</accession>
<proteinExistence type="inferred from homology"/>